<accession>P0CP94</accession>
<accession>Q55XH1</accession>
<accession>Q5KMG3</accession>
<protein>
    <recommendedName>
        <fullName>FK506-binding protein 1</fullName>
        <shortName>FKBP</shortName>
        <ecNumber>5.2.1.8</ecNumber>
    </recommendedName>
    <alternativeName>
        <fullName>Peptidyl-prolyl cis-trans isomerase</fullName>
        <shortName>PPIase</shortName>
    </alternativeName>
    <alternativeName>
        <fullName>Rapamycin-binding protein</fullName>
    </alternativeName>
</protein>
<reference key="1">
    <citation type="journal article" date="2005" name="Science">
        <title>The genome of the basidiomycetous yeast and human pathogen Cryptococcus neoformans.</title>
        <authorList>
            <person name="Loftus B.J."/>
            <person name="Fung E."/>
            <person name="Roncaglia P."/>
            <person name="Rowley D."/>
            <person name="Amedeo P."/>
            <person name="Bruno D."/>
            <person name="Vamathevan J."/>
            <person name="Miranda M."/>
            <person name="Anderson I.J."/>
            <person name="Fraser J.A."/>
            <person name="Allen J.E."/>
            <person name="Bosdet I.E."/>
            <person name="Brent M.R."/>
            <person name="Chiu R."/>
            <person name="Doering T.L."/>
            <person name="Donlin M.J."/>
            <person name="D'Souza C.A."/>
            <person name="Fox D.S."/>
            <person name="Grinberg V."/>
            <person name="Fu J."/>
            <person name="Fukushima M."/>
            <person name="Haas B.J."/>
            <person name="Huang J.C."/>
            <person name="Janbon G."/>
            <person name="Jones S.J.M."/>
            <person name="Koo H.L."/>
            <person name="Krzywinski M.I."/>
            <person name="Kwon-Chung K.J."/>
            <person name="Lengeler K.B."/>
            <person name="Maiti R."/>
            <person name="Marra M.A."/>
            <person name="Marra R.E."/>
            <person name="Mathewson C.A."/>
            <person name="Mitchell T.G."/>
            <person name="Pertea M."/>
            <person name="Riggs F.R."/>
            <person name="Salzberg S.L."/>
            <person name="Schein J.E."/>
            <person name="Shvartsbeyn A."/>
            <person name="Shin H."/>
            <person name="Shumway M."/>
            <person name="Specht C.A."/>
            <person name="Suh B.B."/>
            <person name="Tenney A."/>
            <person name="Utterback T.R."/>
            <person name="Wickes B.L."/>
            <person name="Wortman J.R."/>
            <person name="Wye N.H."/>
            <person name="Kronstad J.W."/>
            <person name="Lodge J.K."/>
            <person name="Heitman J."/>
            <person name="Davis R.W."/>
            <person name="Fraser C.M."/>
            <person name="Hyman R.W."/>
        </authorList>
    </citation>
    <scope>NUCLEOTIDE SEQUENCE [LARGE SCALE GENOMIC DNA]</scope>
    <source>
        <strain>JEC21 / ATCC MYA-565</strain>
    </source>
</reference>
<reference key="2">
    <citation type="submission" date="2006-02" db="UniProtKB">
        <authorList>
            <person name="Pemberton T.J."/>
        </authorList>
    </citation>
    <scope>IDENTIFICATION OF PROBABLE INITIATION SITE</scope>
</reference>
<keyword id="KW-0963">Cytoplasm</keyword>
<keyword id="KW-0413">Isomerase</keyword>
<keyword id="KW-1185">Reference proteome</keyword>
<keyword id="KW-0697">Rotamase</keyword>
<name>FKBP_CRYNJ</name>
<feature type="chain" id="PRO_0000233322" description="FK506-binding protein 1">
    <location>
        <begin position="1"/>
        <end position="108"/>
    </location>
</feature>
<feature type="domain" description="PPIase FKBP-type" evidence="2">
    <location>
        <begin position="20"/>
        <end position="108"/>
    </location>
</feature>
<sequence length="108" mass="11609">MGVTVENISAGDGKTFPQPGDSVTIHYVGTLLDGSKFDSSRDRGTPFVCRIGQGQVIRGWDEGVPQLSIGQKANLICTPDYAYGARGFPPVIPPNSTLKFEVELLKIN</sequence>
<evidence type="ECO:0000250" key="1"/>
<evidence type="ECO:0000255" key="2">
    <source>
        <dbReference type="PROSITE-ProRule" id="PRU00277"/>
    </source>
</evidence>
<evidence type="ECO:0000305" key="3"/>
<comment type="function">
    <text evidence="1">PPIases accelerate the folding of proteins. It catalyzes the cis-trans isomerization of proline imidic peptide bonds in oligopeptides (By similarity).</text>
</comment>
<comment type="catalytic activity">
    <reaction>
        <text>[protein]-peptidylproline (omega=180) = [protein]-peptidylproline (omega=0)</text>
        <dbReference type="Rhea" id="RHEA:16237"/>
        <dbReference type="Rhea" id="RHEA-COMP:10747"/>
        <dbReference type="Rhea" id="RHEA-COMP:10748"/>
        <dbReference type="ChEBI" id="CHEBI:83833"/>
        <dbReference type="ChEBI" id="CHEBI:83834"/>
        <dbReference type="EC" id="5.2.1.8"/>
    </reaction>
</comment>
<comment type="activity regulation">
    <text evidence="1">Inhibited by both FK506 and rapamycin.</text>
</comment>
<comment type="subcellular location">
    <subcellularLocation>
        <location evidence="1">Cytoplasm</location>
    </subcellularLocation>
</comment>
<comment type="similarity">
    <text evidence="3">Belongs to the FKBP-type PPIase family. FKBP1 subfamily.</text>
</comment>
<comment type="sequence caution" evidence="3">
    <conflict type="erroneous initiation">
        <sequence resource="EMBL-CDS" id="AAW41744"/>
    </conflict>
    <text>Extended N-terminus.</text>
</comment>
<dbReference type="EC" id="5.2.1.8"/>
<dbReference type="EMBL" id="AE017342">
    <property type="protein sequence ID" value="AAW41744.1"/>
    <property type="status" value="ALT_INIT"/>
    <property type="molecule type" value="Genomic_DNA"/>
</dbReference>
<dbReference type="RefSeq" id="XP_569051.1">
    <property type="nucleotide sequence ID" value="XM_569051.1"/>
</dbReference>
<dbReference type="SMR" id="P0CP94"/>
<dbReference type="FunCoup" id="P0CP94">
    <property type="interactions" value="144"/>
</dbReference>
<dbReference type="STRING" id="214684.P0CP94"/>
<dbReference type="PaxDb" id="214684-P0CP94"/>
<dbReference type="EnsemblFungi" id="AAW41744">
    <property type="protein sequence ID" value="AAW41744"/>
    <property type="gene ID" value="CNB01800"/>
</dbReference>
<dbReference type="GeneID" id="3255688"/>
<dbReference type="KEGG" id="cne:CNB01800"/>
<dbReference type="eggNOG" id="KOG0544">
    <property type="taxonomic scope" value="Eukaryota"/>
</dbReference>
<dbReference type="InParanoid" id="P0CP94"/>
<dbReference type="OrthoDB" id="1902587at2759"/>
<dbReference type="Proteomes" id="UP000002149">
    <property type="component" value="Chromosome 2"/>
</dbReference>
<dbReference type="GO" id="GO:0005737">
    <property type="term" value="C:cytoplasm"/>
    <property type="evidence" value="ECO:0000318"/>
    <property type="project" value="GO_Central"/>
</dbReference>
<dbReference type="GO" id="GO:0003755">
    <property type="term" value="F:peptidyl-prolyl cis-trans isomerase activity"/>
    <property type="evidence" value="ECO:0000318"/>
    <property type="project" value="GO_Central"/>
</dbReference>
<dbReference type="FunFam" id="3.10.50.40:FF:000025">
    <property type="entry name" value="Peptidylprolyl isomerase"/>
    <property type="match status" value="1"/>
</dbReference>
<dbReference type="Gene3D" id="3.10.50.40">
    <property type="match status" value="1"/>
</dbReference>
<dbReference type="InterPro" id="IPR050689">
    <property type="entry name" value="FKBP-type_PPIase"/>
</dbReference>
<dbReference type="InterPro" id="IPR046357">
    <property type="entry name" value="PPIase_dom_sf"/>
</dbReference>
<dbReference type="InterPro" id="IPR001179">
    <property type="entry name" value="PPIase_FKBP_dom"/>
</dbReference>
<dbReference type="PANTHER" id="PTHR10516:SF443">
    <property type="entry name" value="FK506-BINDING PROTEIN 59-RELATED"/>
    <property type="match status" value="1"/>
</dbReference>
<dbReference type="PANTHER" id="PTHR10516">
    <property type="entry name" value="PEPTIDYL-PROLYL CIS-TRANS ISOMERASE"/>
    <property type="match status" value="1"/>
</dbReference>
<dbReference type="Pfam" id="PF00254">
    <property type="entry name" value="FKBP_C"/>
    <property type="match status" value="1"/>
</dbReference>
<dbReference type="SUPFAM" id="SSF54534">
    <property type="entry name" value="FKBP-like"/>
    <property type="match status" value="1"/>
</dbReference>
<dbReference type="PROSITE" id="PS50059">
    <property type="entry name" value="FKBP_PPIASE"/>
    <property type="match status" value="1"/>
</dbReference>
<proteinExistence type="inferred from homology"/>
<gene>
    <name type="primary">FPR1</name>
    <name type="synonym">FRR1</name>
    <name type="ordered locus">CNB01800</name>
</gene>
<organism>
    <name type="scientific">Cryptococcus neoformans var. neoformans serotype D (strain JEC21 / ATCC MYA-565)</name>
    <name type="common">Filobasidiella neoformans</name>
    <dbReference type="NCBI Taxonomy" id="214684"/>
    <lineage>
        <taxon>Eukaryota</taxon>
        <taxon>Fungi</taxon>
        <taxon>Dikarya</taxon>
        <taxon>Basidiomycota</taxon>
        <taxon>Agaricomycotina</taxon>
        <taxon>Tremellomycetes</taxon>
        <taxon>Tremellales</taxon>
        <taxon>Cryptococcaceae</taxon>
        <taxon>Cryptococcus</taxon>
        <taxon>Cryptococcus neoformans species complex</taxon>
    </lineage>
</organism>